<protein>
    <recommendedName>
        <fullName evidence="12">Sterol-4-alpha-carboxylate 3-dehydrogenase ERG26, decarboxylating</fullName>
        <ecNumber evidence="10">1.1.1.170</ecNumber>
    </recommendedName>
    <alternativeName>
        <fullName evidence="12">C-3 sterol dehydrogenase ERG26</fullName>
    </alternativeName>
    <alternativeName>
        <fullName evidence="12">C-4 decarboxylase ERG26</fullName>
    </alternativeName>
    <alternativeName>
        <fullName evidence="12">Ergosterol biosynthetic protein 26</fullName>
    </alternativeName>
</protein>
<dbReference type="EC" id="1.1.1.170" evidence="10"/>
<dbReference type="EMBL" id="Z72523">
    <property type="protein sequence ID" value="CAA96701.1"/>
    <property type="molecule type" value="Genomic_DNA"/>
</dbReference>
<dbReference type="EMBL" id="AY693026">
    <property type="protein sequence ID" value="AAT93045.1"/>
    <property type="molecule type" value="Genomic_DNA"/>
</dbReference>
<dbReference type="EMBL" id="BK006941">
    <property type="protein sequence ID" value="DAA08098.1"/>
    <property type="molecule type" value="Genomic_DNA"/>
</dbReference>
<dbReference type="PIR" id="S64003">
    <property type="entry name" value="S64003"/>
</dbReference>
<dbReference type="RefSeq" id="NP_011514.1">
    <property type="nucleotide sequence ID" value="NM_001180866.1"/>
</dbReference>
<dbReference type="SMR" id="P53199"/>
<dbReference type="BioGRID" id="33244">
    <property type="interactions" value="303"/>
</dbReference>
<dbReference type="DIP" id="DIP-6786N"/>
<dbReference type="FunCoup" id="P53199">
    <property type="interactions" value="534"/>
</dbReference>
<dbReference type="IntAct" id="P53199">
    <property type="interactions" value="26"/>
</dbReference>
<dbReference type="MINT" id="P53199"/>
<dbReference type="STRING" id="4932.YGL001C"/>
<dbReference type="SwissLipids" id="SLP:000001310"/>
<dbReference type="iPTMnet" id="P53199"/>
<dbReference type="PaxDb" id="4932-YGL001C"/>
<dbReference type="PeptideAtlas" id="P53199"/>
<dbReference type="EnsemblFungi" id="YGL001C_mRNA">
    <property type="protein sequence ID" value="YGL001C"/>
    <property type="gene ID" value="YGL001C"/>
</dbReference>
<dbReference type="GeneID" id="852883"/>
<dbReference type="KEGG" id="sce:YGL001C"/>
<dbReference type="AGR" id="SGD:S000002969"/>
<dbReference type="SGD" id="S000002969">
    <property type="gene designation" value="ERG26"/>
</dbReference>
<dbReference type="VEuPathDB" id="FungiDB:YGL001C"/>
<dbReference type="eggNOG" id="KOG1430">
    <property type="taxonomic scope" value="Eukaryota"/>
</dbReference>
<dbReference type="GeneTree" id="ENSGT00940000158229"/>
<dbReference type="HOGENOM" id="CLU_007383_6_8_1"/>
<dbReference type="InParanoid" id="P53199"/>
<dbReference type="OMA" id="STAHWFD"/>
<dbReference type="OrthoDB" id="10058185at2759"/>
<dbReference type="BioCyc" id="MetaCyc:YGL001C-MONOMER"/>
<dbReference type="BioCyc" id="YEAST:YGL001C-MONOMER"/>
<dbReference type="BRENDA" id="1.1.1.170">
    <property type="organism ID" value="984"/>
</dbReference>
<dbReference type="Reactome" id="R-SCE-191273">
    <property type="pathway name" value="Cholesterol biosynthesis"/>
</dbReference>
<dbReference type="UniPathway" id="UPA00770">
    <property type="reaction ID" value="UER00757"/>
</dbReference>
<dbReference type="BioGRID-ORCS" id="852883">
    <property type="hits" value="0 hits in 10 CRISPR screens"/>
</dbReference>
<dbReference type="CD-CODE" id="E03F929F">
    <property type="entry name" value="Stress granule"/>
</dbReference>
<dbReference type="PRO" id="PR:P53199"/>
<dbReference type="Proteomes" id="UP000002311">
    <property type="component" value="Chromosome VII"/>
</dbReference>
<dbReference type="RNAct" id="P53199">
    <property type="molecule type" value="protein"/>
</dbReference>
<dbReference type="GO" id="GO:0005783">
    <property type="term" value="C:endoplasmic reticulum"/>
    <property type="evidence" value="ECO:0000314"/>
    <property type="project" value="SGD"/>
</dbReference>
<dbReference type="GO" id="GO:0005789">
    <property type="term" value="C:endoplasmic reticulum membrane"/>
    <property type="evidence" value="ECO:0000314"/>
    <property type="project" value="SGD"/>
</dbReference>
<dbReference type="GO" id="GO:0102175">
    <property type="term" value="F:3-beta-hydroxysteroid dehydrogenase (NAD+)/C4-decarboxylase activity"/>
    <property type="evidence" value="ECO:0000315"/>
    <property type="project" value="UniProt"/>
</dbReference>
<dbReference type="GO" id="GO:0000252">
    <property type="term" value="F:3-beta-hydroxysteroid dehydrogenase [NAD(P)+]/C4-decarboxylase activity"/>
    <property type="evidence" value="ECO:0000314"/>
    <property type="project" value="SGD"/>
</dbReference>
<dbReference type="GO" id="GO:0006696">
    <property type="term" value="P:ergosterol biosynthetic process"/>
    <property type="evidence" value="ECO:0000314"/>
    <property type="project" value="SGD"/>
</dbReference>
<dbReference type="CDD" id="cd09813">
    <property type="entry name" value="3b-HSD-NSDHL-like_SDR_e"/>
    <property type="match status" value="1"/>
</dbReference>
<dbReference type="FunFam" id="3.40.50.720:FF:000346">
    <property type="entry name" value="C-3 sterol dehydrogenase/C-4 decarboxylase"/>
    <property type="match status" value="1"/>
</dbReference>
<dbReference type="Gene3D" id="3.40.50.720">
    <property type="entry name" value="NAD(P)-binding Rossmann-like Domain"/>
    <property type="match status" value="1"/>
</dbReference>
<dbReference type="InterPro" id="IPR002225">
    <property type="entry name" value="3Beta_OHSteriod_DH/Estase"/>
</dbReference>
<dbReference type="InterPro" id="IPR050177">
    <property type="entry name" value="Lipid_A_modif_metabolic_enz"/>
</dbReference>
<dbReference type="InterPro" id="IPR036291">
    <property type="entry name" value="NAD(P)-bd_dom_sf"/>
</dbReference>
<dbReference type="PANTHER" id="PTHR43245">
    <property type="entry name" value="BIFUNCTIONAL POLYMYXIN RESISTANCE PROTEIN ARNA"/>
    <property type="match status" value="1"/>
</dbReference>
<dbReference type="PANTHER" id="PTHR43245:SF51">
    <property type="entry name" value="SHORT CHAIN DEHYDROGENASE_REDUCTASE FAMILY 42E, MEMBER 2"/>
    <property type="match status" value="1"/>
</dbReference>
<dbReference type="Pfam" id="PF01073">
    <property type="entry name" value="3Beta_HSD"/>
    <property type="match status" value="1"/>
</dbReference>
<dbReference type="SUPFAM" id="SSF51735">
    <property type="entry name" value="NAD(P)-binding Rossmann-fold domains"/>
    <property type="match status" value="1"/>
</dbReference>
<keyword id="KW-0256">Endoplasmic reticulum</keyword>
<keyword id="KW-0444">Lipid biosynthesis</keyword>
<keyword id="KW-0443">Lipid metabolism</keyword>
<keyword id="KW-0472">Membrane</keyword>
<keyword id="KW-0520">NAD</keyword>
<keyword id="KW-0521">NADP</keyword>
<keyword id="KW-0560">Oxidoreductase</keyword>
<keyword id="KW-1185">Reference proteome</keyword>
<keyword id="KW-0752">Steroid biosynthesis</keyword>
<keyword id="KW-0753">Steroid metabolism</keyword>
<keyword id="KW-0756">Sterol biosynthesis</keyword>
<keyword id="KW-1207">Sterol metabolism</keyword>
<gene>
    <name evidence="12" type="primary">ERG26</name>
    <name type="ordered locus">YGL001C</name>
</gene>
<comment type="function">
    <text evidence="8 10 11">Sterol-4-alpha-carboxylate 3-dehydrogenase; part of the third module of ergosterol biosynthesis pathway that includes the late steps of the pathway (PubMed:15995173, PubMed:9811880). ERG26 is a catalytic component of the C-4 demethylation complex that catalyzes the oxidative decarboxylation that results in a reduction of the 3-beta-hydroxy group at the C-3 carbon to an oxo group (PubMed:9811880). The third module or late pathway involves the ergosterol synthesis itself through consecutive reactions that mainly occur in the endoplasmic reticulum (ER) membrane. Firstly, the squalene synthase ERG9 catalyzes the condensation of 2 farnesyl pyrophosphate moieties to form squalene, which is the precursor of all steroids. Squalene synthase is crucial for balancing the incorporation of farnesyl diphosphate (FPP) into sterol and nonsterol isoprene synthesis. Secondly, the squalene epoxidase ERG1 catalyzes the stereospecific oxidation of squalene to (S)-2,3-epoxysqualene, which is considered to be a rate-limiting enzyme in steroid biosynthesis. Then, the lanosterol synthase ERG7 catalyzes the cyclization of (S)-2,3 oxidosqualene to lanosterol, a reaction that forms the sterol core. In the next steps, lanosterol is transformed to zymosterol through a complex process involving various demethylation, reduction and desaturation reactions. The lanosterol 14-alpha-demethylase ERG11 (also known as CYP51) catalyzes C14-demethylation of lanosterol to produce 4,4'-dimethyl cholesta-8,14,24-triene-3-beta-ol, which is critical for ergosterol biosynthesis. The C-14 reductase ERG24 reduces the C14=C15 double bond of 4,4-dimethyl-cholesta-8,14,24-trienol to produce 4,4-dimethyl-cholesta-8,24-dienol. 4,4-dimethyl-cholesta-8,24-dienol is substrate of the C-4 demethylation complex ERG25-ERG26-ERG27 in which ERG25 catalyzes the three-step monooxygenation required for the demethylation of 4,4-dimethyl and 4alpha-methylsterols, ERG26 catalyzes the oxidative decarboxylation that results in a reduction of the 3-beta-hydroxy group at the C-3 carbon to an oxo group, and ERG27 is responsible for the reduction of the keto group on the C-3. ERG28 has a role as a scaffold to help anchor ERG25, ERG26 and ERG27 to the endoplasmic reticulum and ERG29 regulates the activity of the iron-containing C4-methylsterol oxidase ERG25. Then, the sterol 24-C-methyltransferase ERG6 catalyzes the methyl transfer from S-adenosyl-methionine to the C-24 of zymosterol to form fecosterol. The C-8 sterol isomerase ERG2 catalyzes the reaction which results in unsaturation at C-7 in the B ring of sterols and thus converts fecosterol to episterol. The sterol-C5-desaturase ERG3 then catalyzes the introduction of a C-5 double bond in the B ring to produce 5-dehydroepisterol. The C-22 sterol desaturase ERG5 further converts 5-dehydroepisterol into ergosta-5,7,22,24(28)-tetraen-3beta-ol by forming the C-22(23) double bond in the sterol side chain. Finally, ergosta-5,7,22,24(28)-tetraen-3beta-ol is substrate of the C-24(28) sterol reductase ERG4 to produce ergosterol (PubMed:32679672).</text>
</comment>
<comment type="catalytic activity">
    <reaction evidence="10">
        <text>4beta-methylzymosterol-4alpha-carboxylate + NADP(+) = 3-dehydro-4-methylzymosterol + CO2 + NADPH</text>
        <dbReference type="Rhea" id="RHEA:33447"/>
        <dbReference type="ChEBI" id="CHEBI:16526"/>
        <dbReference type="ChEBI" id="CHEBI:50593"/>
        <dbReference type="ChEBI" id="CHEBI:57783"/>
        <dbReference type="ChEBI" id="CHEBI:58349"/>
        <dbReference type="ChEBI" id="CHEBI:64925"/>
        <dbReference type="EC" id="1.1.1.170"/>
    </reaction>
    <physiologicalReaction direction="left-to-right" evidence="14">
        <dbReference type="Rhea" id="RHEA:33448"/>
    </physiologicalReaction>
</comment>
<comment type="activity regulation">
    <text evidence="9">Inhibited by FR171456, a natural product with broad antifungal activity.</text>
</comment>
<comment type="pathway">
    <text evidence="10">Steroid biosynthesis; zymosterol biosynthesis; zymosterol from lanosterol: step 4/6.</text>
</comment>
<comment type="subunit">
    <text evidence="4 5 8">Heterotetramer of ERG25, ERG26, ERG27 and ERG28. ERG28 acts as a scaffold to tether ERG27 and other 4,4-demethylation-related enzymes, forming a demethylation enzyme complex, in the endoplasmic reticulum.</text>
</comment>
<comment type="interaction">
    <interactant intactId="EBI-6514">
        <id>P53199</id>
    </interactant>
    <interactant intactId="EBI-6502">
        <id>P32462</id>
        <label>ERG24</label>
    </interactant>
    <organismsDiffer>false</organismsDiffer>
    <experiments>3</experiments>
</comment>
<comment type="interaction">
    <interactant intactId="EBI-6514">
        <id>P53199</id>
    </interactant>
    <interactant intactId="EBI-22518">
        <id>P40030</id>
        <label>ERG28</label>
    </interactant>
    <organismsDiffer>false</organismsDiffer>
    <experiments>3</experiments>
</comment>
<comment type="interaction">
    <interactant intactId="EBI-6514">
        <id>P53199</id>
    </interactant>
    <interactant intactId="EBI-6865">
        <id>P29704</id>
        <label>ERG9</label>
    </interactant>
    <organismsDiffer>false</organismsDiffer>
    <experiments>2</experiments>
</comment>
<comment type="interaction">
    <interactant intactId="EBI-6514">
        <id>P53199</id>
    </interactant>
    <interactant intactId="EBI-4300">
        <id>P38132</id>
        <label>MCM7</label>
    </interactant>
    <organismsDiffer>false</organismsDiffer>
    <experiments>2</experiments>
</comment>
<comment type="subcellular location">
    <subcellularLocation>
        <location evidence="4 5 7">Endoplasmic reticulum membrane</location>
        <topology evidence="5 7">Peripheral membrane protein</topology>
    </subcellularLocation>
</comment>
<comment type="miscellaneous">
    <text evidence="6">Present with 2580 molecules/cell in log phase SD medium.</text>
</comment>
<comment type="similarity">
    <text evidence="13">Belongs to the 3-beta-HSD family.</text>
</comment>
<evidence type="ECO:0000250" key="1">
    <source>
        <dbReference type="UniProtKB" id="A0A059TC02"/>
    </source>
</evidence>
<evidence type="ECO:0000250" key="2">
    <source>
        <dbReference type="UniProtKB" id="P51110"/>
    </source>
</evidence>
<evidence type="ECO:0000250" key="3">
    <source>
        <dbReference type="UniProtKB" id="Q12068"/>
    </source>
</evidence>
<evidence type="ECO:0000269" key="4">
    <source>
    </source>
</evidence>
<evidence type="ECO:0000269" key="5">
    <source>
    </source>
</evidence>
<evidence type="ECO:0000269" key="6">
    <source>
    </source>
</evidence>
<evidence type="ECO:0000269" key="7">
    <source>
    </source>
</evidence>
<evidence type="ECO:0000269" key="8">
    <source>
    </source>
</evidence>
<evidence type="ECO:0000269" key="9">
    <source>
    </source>
</evidence>
<evidence type="ECO:0000269" key="10">
    <source>
    </source>
</evidence>
<evidence type="ECO:0000303" key="11">
    <source>
    </source>
</evidence>
<evidence type="ECO:0000303" key="12">
    <source>
    </source>
</evidence>
<evidence type="ECO:0000305" key="13"/>
<evidence type="ECO:0000305" key="14">
    <source>
    </source>
</evidence>
<reference key="1">
    <citation type="journal article" date="1997" name="Nature">
        <title>The nucleotide sequence of Saccharomyces cerevisiae chromosome VII.</title>
        <authorList>
            <person name="Tettelin H."/>
            <person name="Agostoni-Carbone M.L."/>
            <person name="Albermann K."/>
            <person name="Albers M."/>
            <person name="Arroyo J."/>
            <person name="Backes U."/>
            <person name="Barreiros T."/>
            <person name="Bertani I."/>
            <person name="Bjourson A.J."/>
            <person name="Brueckner M."/>
            <person name="Bruschi C.V."/>
            <person name="Carignani G."/>
            <person name="Castagnoli L."/>
            <person name="Cerdan E."/>
            <person name="Clemente M.L."/>
            <person name="Coblenz A."/>
            <person name="Coglievina M."/>
            <person name="Coissac E."/>
            <person name="Defoor E."/>
            <person name="Del Bino S."/>
            <person name="Delius H."/>
            <person name="Delneri D."/>
            <person name="de Wergifosse P."/>
            <person name="Dujon B."/>
            <person name="Durand P."/>
            <person name="Entian K.-D."/>
            <person name="Eraso P."/>
            <person name="Escribano V."/>
            <person name="Fabiani L."/>
            <person name="Fartmann B."/>
            <person name="Feroli F."/>
            <person name="Feuermann M."/>
            <person name="Frontali L."/>
            <person name="Garcia-Gonzalez M."/>
            <person name="Garcia-Saez M.I."/>
            <person name="Goffeau A."/>
            <person name="Guerreiro P."/>
            <person name="Hani J."/>
            <person name="Hansen M."/>
            <person name="Hebling U."/>
            <person name="Hernandez K."/>
            <person name="Heumann K."/>
            <person name="Hilger F."/>
            <person name="Hofmann B."/>
            <person name="Indge K.J."/>
            <person name="James C.M."/>
            <person name="Klima R."/>
            <person name="Koetter P."/>
            <person name="Kramer B."/>
            <person name="Kramer W."/>
            <person name="Lauquin G."/>
            <person name="Leuther H."/>
            <person name="Louis E.J."/>
            <person name="Maillier E."/>
            <person name="Marconi A."/>
            <person name="Martegani E."/>
            <person name="Mazon M.J."/>
            <person name="Mazzoni C."/>
            <person name="McReynolds A.D.K."/>
            <person name="Melchioretto P."/>
            <person name="Mewes H.-W."/>
            <person name="Minenkova O."/>
            <person name="Mueller-Auer S."/>
            <person name="Nawrocki A."/>
            <person name="Netter P."/>
            <person name="Neu R."/>
            <person name="Nombela C."/>
            <person name="Oliver S.G."/>
            <person name="Panzeri L."/>
            <person name="Paoluzi S."/>
            <person name="Plevani P."/>
            <person name="Portetelle D."/>
            <person name="Portillo F."/>
            <person name="Potier S."/>
            <person name="Purnelle B."/>
            <person name="Rieger M."/>
            <person name="Riles L."/>
            <person name="Rinaldi T."/>
            <person name="Robben J."/>
            <person name="Rodrigues-Pousada C."/>
            <person name="Rodriguez-Belmonte E."/>
            <person name="Rodriguez-Torres A.M."/>
            <person name="Rose M."/>
            <person name="Ruzzi M."/>
            <person name="Saliola M."/>
            <person name="Sanchez-Perez M."/>
            <person name="Schaefer B."/>
            <person name="Schaefer M."/>
            <person name="Scharfe M."/>
            <person name="Schmidheini T."/>
            <person name="Schreer A."/>
            <person name="Skala J."/>
            <person name="Souciet J.-L."/>
            <person name="Steensma H.Y."/>
            <person name="Talla E."/>
            <person name="Thierry A."/>
            <person name="Vandenbol M."/>
            <person name="van der Aart Q.J.M."/>
            <person name="Van Dyck L."/>
            <person name="Vanoni M."/>
            <person name="Verhasselt P."/>
            <person name="Voet M."/>
            <person name="Volckaert G."/>
            <person name="Wambutt R."/>
            <person name="Watson M.D."/>
            <person name="Weber N."/>
            <person name="Wedler E."/>
            <person name="Wedler H."/>
            <person name="Wipfli P."/>
            <person name="Wolf K."/>
            <person name="Wright L.F."/>
            <person name="Zaccaria P."/>
            <person name="Zimmermann M."/>
            <person name="Zollner A."/>
            <person name="Kleine K."/>
        </authorList>
    </citation>
    <scope>NUCLEOTIDE SEQUENCE [LARGE SCALE GENOMIC DNA]</scope>
    <source>
        <strain>ATCC 204508 / S288c</strain>
    </source>
</reference>
<reference key="2">
    <citation type="journal article" date="2014" name="G3 (Bethesda)">
        <title>The reference genome sequence of Saccharomyces cerevisiae: Then and now.</title>
        <authorList>
            <person name="Engel S.R."/>
            <person name="Dietrich F.S."/>
            <person name="Fisk D.G."/>
            <person name="Binkley G."/>
            <person name="Balakrishnan R."/>
            <person name="Costanzo M.C."/>
            <person name="Dwight S.S."/>
            <person name="Hitz B.C."/>
            <person name="Karra K."/>
            <person name="Nash R.S."/>
            <person name="Weng S."/>
            <person name="Wong E.D."/>
            <person name="Lloyd P."/>
            <person name="Skrzypek M.S."/>
            <person name="Miyasato S.R."/>
            <person name="Simison M."/>
            <person name="Cherry J.M."/>
        </authorList>
    </citation>
    <scope>GENOME REANNOTATION</scope>
    <source>
        <strain>ATCC 204508 / S288c</strain>
    </source>
</reference>
<reference key="3">
    <citation type="journal article" date="2007" name="Genome Res.">
        <title>Approaching a complete repository of sequence-verified protein-encoding clones for Saccharomyces cerevisiae.</title>
        <authorList>
            <person name="Hu Y."/>
            <person name="Rolfs A."/>
            <person name="Bhullar B."/>
            <person name="Murthy T.V.S."/>
            <person name="Zhu C."/>
            <person name="Berger M.F."/>
            <person name="Camargo A.A."/>
            <person name="Kelley F."/>
            <person name="McCarron S."/>
            <person name="Jepson D."/>
            <person name="Richardson A."/>
            <person name="Raphael J."/>
            <person name="Moreira D."/>
            <person name="Taycher E."/>
            <person name="Zuo D."/>
            <person name="Mohr S."/>
            <person name="Kane M.F."/>
            <person name="Williamson J."/>
            <person name="Simpson A.J.G."/>
            <person name="Bulyk M.L."/>
            <person name="Harlow E."/>
            <person name="Marsischky G."/>
            <person name="Kolodner R.D."/>
            <person name="LaBaer J."/>
        </authorList>
    </citation>
    <scope>NUCLEOTIDE SEQUENCE [GENOMIC DNA]</scope>
    <source>
        <strain>ATCC 204508 / S288c</strain>
    </source>
</reference>
<reference key="4">
    <citation type="journal article" date="1998" name="Proc. Natl. Acad. Sci. U.S.A.">
        <title>Characterization of the Saccharomyces cerevisiae ERG26 gene encoding the C-3 sterol dehydrogenase (C-4 decarboxylase) involved in sterol biosynthesis.</title>
        <authorList>
            <person name="Gachotte D."/>
            <person name="Barbuch R."/>
            <person name="Gaylor J."/>
            <person name="Nickel E."/>
            <person name="Bard M."/>
        </authorList>
    </citation>
    <scope>FUNCTION</scope>
    <scope>CATALYTIC ACTIVITY</scope>
</reference>
<reference key="5">
    <citation type="journal article" date="1999" name="Proc. Natl. Acad. Sci. U.S.A.">
        <authorList>
            <person name="Gachotte D."/>
            <person name="Barbuch R."/>
            <person name="Gaylor J."/>
            <person name="Nickel E."/>
            <person name="Bard M."/>
        </authorList>
    </citation>
    <scope>ERRATUM OF PUBMED:9811880</scope>
</reference>
<reference key="6">
    <citation type="journal article" date="2001" name="J. Biol. Chem.">
        <title>The effect of the erg26-1 mutation on the regulation of lipid metabolism in Saccharomyces cerevisiae.</title>
        <authorList>
            <person name="Baudry K."/>
            <person name="Swain E."/>
            <person name="Rahier A."/>
            <person name="Germann M."/>
            <person name="Batta A."/>
            <person name="Rondet S."/>
            <person name="Mandala S."/>
            <person name="Henry K."/>
            <person name="Tint G.S."/>
            <person name="Edlind T."/>
            <person name="Kurtz M."/>
            <person name="Nickels J.T. Jr."/>
        </authorList>
    </citation>
    <scope>SUBCELLULAR LOCATION</scope>
    <scope>INTERACTION WITH ERG25 AND ERG27</scope>
</reference>
<reference key="7">
    <citation type="journal article" date="2002" name="Proc. Natl. Acad. Sci. U.S.A.">
        <title>Protein-protein interactions among C-4 demethylation enzymes involved in yeast sterol biosynthesis.</title>
        <authorList>
            <person name="Mo C."/>
            <person name="Valachovic M."/>
            <person name="Randall S.K."/>
            <person name="Nickels J.T."/>
            <person name="Bard M."/>
        </authorList>
    </citation>
    <scope>FUNCTION</scope>
    <scope>SUBUNIT</scope>
    <scope>SUBCELLULAR LOCATION</scope>
</reference>
<reference key="8">
    <citation type="journal article" date="2003" name="Nature">
        <title>Global analysis of protein expression in yeast.</title>
        <authorList>
            <person name="Ghaemmaghami S."/>
            <person name="Huh W.-K."/>
            <person name="Bower K."/>
            <person name="Howson R.W."/>
            <person name="Belle A."/>
            <person name="Dephoure N."/>
            <person name="O'Shea E.K."/>
            <person name="Weissman J.S."/>
        </authorList>
    </citation>
    <scope>LEVEL OF PROTEIN EXPRESSION [LARGE SCALE ANALYSIS]</scope>
</reference>
<reference key="9">
    <citation type="journal article" date="2005" name="J. Lipid Res.">
        <title>Erg28p is a key protein in the yeast sterol biosynthetic enzyme complex.</title>
        <authorList>
            <person name="Mo C."/>
            <person name="Bard M."/>
        </authorList>
    </citation>
    <scope>FUNCTION</scope>
    <scope>INTERACTION WITH ERG28</scope>
</reference>
<reference key="10">
    <citation type="journal article" date="2005" name="Mol. Cell. Proteomics">
        <title>The spatial organization of lipid synthesis in the yeast Saccharomyces cerevisiae derived from large scale green fluorescent protein tagging and high resolution microscopy.</title>
        <authorList>
            <person name="Natter K."/>
            <person name="Leitner P."/>
            <person name="Faschinger A."/>
            <person name="Wolinski H."/>
            <person name="McCraith S."/>
            <person name="Fields S."/>
            <person name="Kohlwein S.D."/>
        </authorList>
    </citation>
    <scope>SUBCELLULAR LOCATION</scope>
</reference>
<reference key="11">
    <citation type="journal article" date="2015" name="Nat. Commun.">
        <title>FR171456 is a specific inhibitor of mammalian NSDHL and yeast Erg26p.</title>
        <authorList>
            <person name="Helliwell S.B."/>
            <person name="Karkare S."/>
            <person name="Bergdoll M."/>
            <person name="Rahier A."/>
            <person name="Leighton-Davis J.R."/>
            <person name="Fioretto C."/>
            <person name="Aust T."/>
            <person name="Filipuzzi I."/>
            <person name="Frederiksen M."/>
            <person name="Gounarides J."/>
            <person name="Hoepfner D."/>
            <person name="Hofmann A."/>
            <person name="Imbert P.E."/>
            <person name="Jeker R."/>
            <person name="Knochenmuss R."/>
            <person name="Krastel P."/>
            <person name="Margerit A."/>
            <person name="Memmert K."/>
            <person name="Miault C.V."/>
            <person name="Rao Movva N."/>
            <person name="Muller A."/>
            <person name="Naegeli H.U."/>
            <person name="Oberer L."/>
            <person name="Prindle V."/>
            <person name="Riedl R."/>
            <person name="Schuierer S."/>
            <person name="Sexton J.A."/>
            <person name="Tao J."/>
            <person name="Wagner T."/>
            <person name="Yin H."/>
            <person name="Zhang J."/>
            <person name="Roggo S."/>
            <person name="Reinker S."/>
            <person name="Parker C.N."/>
        </authorList>
    </citation>
    <scope>ACTIVITY REGULATION</scope>
</reference>
<reference key="12">
    <citation type="journal article" date="2020" name="Genes (Basel)">
        <title>Regulation of ergosterol biosynthesis in Saccharomyces cerevisiae.</title>
        <authorList>
            <person name="Jorda T."/>
            <person name="Puig S."/>
        </authorList>
    </citation>
    <scope>REVIEW ON ERGOSTEROL BIOSYNTHESIS</scope>
</reference>
<name>ERG26_YEAST</name>
<accession>P53199</accession>
<accession>D6VUD7</accession>
<feature type="chain" id="PRO_0000087798" description="Sterol-4-alpha-carboxylate 3-dehydrogenase ERG26, decarboxylating">
    <location>
        <begin position="1"/>
        <end position="349"/>
    </location>
</feature>
<feature type="active site" description="Proton donor" evidence="3">
    <location>
        <position position="155"/>
    </location>
</feature>
<feature type="binding site" evidence="2">
    <location>
        <begin position="11"/>
        <end position="17"/>
    </location>
    <ligand>
        <name>NADP(+)</name>
        <dbReference type="ChEBI" id="CHEBI:58349"/>
    </ligand>
</feature>
<feature type="binding site" evidence="2">
    <location>
        <begin position="62"/>
        <end position="63"/>
    </location>
    <ligand>
        <name>NADP(+)</name>
        <dbReference type="ChEBI" id="CHEBI:58349"/>
    </ligand>
</feature>
<feature type="binding site" evidence="2">
    <location>
        <begin position="84"/>
        <end position="86"/>
    </location>
    <ligand>
        <name>NADP(+)</name>
        <dbReference type="ChEBI" id="CHEBI:58349"/>
    </ligand>
</feature>
<feature type="binding site" evidence="2">
    <location>
        <position position="124"/>
    </location>
    <ligand>
        <name>substrate</name>
    </ligand>
</feature>
<feature type="binding site" evidence="1">
    <location>
        <position position="151"/>
    </location>
    <ligand>
        <name>NADP(+)</name>
        <dbReference type="ChEBI" id="CHEBI:58349"/>
    </ligand>
</feature>
<feature type="binding site" evidence="2">
    <location>
        <position position="151"/>
    </location>
    <ligand>
        <name>substrate</name>
    </ligand>
</feature>
<feature type="binding site" evidence="2">
    <location>
        <position position="155"/>
    </location>
    <ligand>
        <name>NADP(+)</name>
        <dbReference type="ChEBI" id="CHEBI:58349"/>
    </ligand>
</feature>
<feature type="binding site" evidence="2">
    <location>
        <begin position="179"/>
        <end position="182"/>
    </location>
    <ligand>
        <name>NADP(+)</name>
        <dbReference type="ChEBI" id="CHEBI:58349"/>
    </ligand>
</feature>
<organism>
    <name type="scientific">Saccharomyces cerevisiae (strain ATCC 204508 / S288c)</name>
    <name type="common">Baker's yeast</name>
    <dbReference type="NCBI Taxonomy" id="559292"/>
    <lineage>
        <taxon>Eukaryota</taxon>
        <taxon>Fungi</taxon>
        <taxon>Dikarya</taxon>
        <taxon>Ascomycota</taxon>
        <taxon>Saccharomycotina</taxon>
        <taxon>Saccharomycetes</taxon>
        <taxon>Saccharomycetales</taxon>
        <taxon>Saccharomycetaceae</taxon>
        <taxon>Saccharomyces</taxon>
    </lineage>
</organism>
<sequence>MSKIDSVLIIGGSGFLGLHLIQQFFDINPKPDIHIFDVRDLPEKLSKQFTFNVDDIKFHKGDLTSPDDMENAINESKANVVVHCASPMHGQNPDIYDIVNVKGTRNVIDMCKKCGVNILVYTSSAGVIFNGQDVHNADETWPIPEVPMDAYNETKAIAEDMVLKANDPSSDFYTVALRPAGIFGPGDRQLVPGLRQVAKLGQSKFQIGDNNNLFDWTYAGNVADAHVLAAQKLLDPKTRTAVSGETFFITNDTPTYFWALARTVWKADGHIDKHVIVLKRPVAICAGYLSEWVSKMLGKEPGLTPFRVKIVCAYRYHNIAKAKKLLGYTPRVGIEEGINKTLAWMDEGL</sequence>
<proteinExistence type="evidence at protein level"/>